<accession>B1YIH8</accession>
<feature type="chain" id="PRO_1000100830" description="Galactokinase">
    <location>
        <begin position="1"/>
        <end position="390"/>
    </location>
</feature>
<feature type="active site" description="Proton acceptor" evidence="1">
    <location>
        <position position="174"/>
    </location>
</feature>
<feature type="binding site" evidence="1">
    <location>
        <begin position="33"/>
        <end position="36"/>
    </location>
    <ligand>
        <name>substrate</name>
    </ligand>
</feature>
<feature type="binding site" evidence="1">
    <location>
        <position position="67"/>
    </location>
    <ligand>
        <name>ATP</name>
        <dbReference type="ChEBI" id="CHEBI:30616"/>
    </ligand>
</feature>
<feature type="binding site" evidence="1">
    <location>
        <begin position="124"/>
        <end position="130"/>
    </location>
    <ligand>
        <name>ATP</name>
        <dbReference type="ChEBI" id="CHEBI:30616"/>
    </ligand>
</feature>
<feature type="binding site" evidence="1">
    <location>
        <position position="130"/>
    </location>
    <ligand>
        <name>Mg(2+)</name>
        <dbReference type="ChEBI" id="CHEBI:18420"/>
    </ligand>
</feature>
<feature type="binding site" evidence="1">
    <location>
        <position position="162"/>
    </location>
    <ligand>
        <name>Mg(2+)</name>
        <dbReference type="ChEBI" id="CHEBI:18420"/>
    </ligand>
</feature>
<feature type="binding site" evidence="1">
    <location>
        <position position="224"/>
    </location>
    <ligand>
        <name>substrate</name>
    </ligand>
</feature>
<feature type="site" description="Transition state stabilizer" evidence="1">
    <location>
        <position position="27"/>
    </location>
</feature>
<proteinExistence type="inferred from homology"/>
<comment type="function">
    <text evidence="1">Catalyzes the transfer of the gamma-phosphate of ATP to D-galactose to form alpha-D-galactose-1-phosphate (Gal-1-P).</text>
</comment>
<comment type="catalytic activity">
    <reaction evidence="1">
        <text>alpha-D-galactose + ATP = alpha-D-galactose 1-phosphate + ADP + H(+)</text>
        <dbReference type="Rhea" id="RHEA:13553"/>
        <dbReference type="ChEBI" id="CHEBI:15378"/>
        <dbReference type="ChEBI" id="CHEBI:28061"/>
        <dbReference type="ChEBI" id="CHEBI:30616"/>
        <dbReference type="ChEBI" id="CHEBI:58336"/>
        <dbReference type="ChEBI" id="CHEBI:456216"/>
        <dbReference type="EC" id="2.7.1.6"/>
    </reaction>
</comment>
<comment type="pathway">
    <text evidence="1">Carbohydrate metabolism; galactose metabolism.</text>
</comment>
<comment type="subcellular location">
    <subcellularLocation>
        <location evidence="1">Cytoplasm</location>
    </subcellularLocation>
</comment>
<comment type="similarity">
    <text evidence="1">Belongs to the GHMP kinase family. GalK subfamily.</text>
</comment>
<sequence>MTDQTLEQIFEQQFGQSSTHRFFAPGRINLIGEHTDYNGGHVFPCALTLGTHAVARKRDDVVFRFYSLNFEDDGIIEVAGDDLTPQSAHGWANYAKGMIHVLREAGYRIDTGCDILIKGDIPNGAGLSSSASLELVIGVLLDKLYNLDIDRIDLVKYGQQVENQYIGVNSGIMDQFAIGMGKAGSGLLLDCETLDYTYAPLDLSGYTIIIMNTNKRRELADSKYNERRSECEAALAYLQQYRPYASLGQWSMNEFETVSFEDERLERRARHAISENERTLQALDALKEDRLEAFGQLMNASHRSLRVDYEVTGKELDTLVEAAWAQPGVLGARMTGAGFGGCAIAIVEDDTVETFMTAVGHAYETEIGYPASFYTATVGDGAREVEQEVI</sequence>
<name>GAL1_EXIS2</name>
<gene>
    <name evidence="1" type="primary">galK</name>
    <name type="ordered locus">Exig_0377</name>
</gene>
<dbReference type="EC" id="2.7.1.6" evidence="1"/>
<dbReference type="EMBL" id="CP001022">
    <property type="protein sequence ID" value="ACB59861.1"/>
    <property type="molecule type" value="Genomic_DNA"/>
</dbReference>
<dbReference type="RefSeq" id="WP_012369285.1">
    <property type="nucleotide sequence ID" value="NC_010556.1"/>
</dbReference>
<dbReference type="SMR" id="B1YIH8"/>
<dbReference type="STRING" id="262543.Exig_0377"/>
<dbReference type="KEGG" id="esi:Exig_0377"/>
<dbReference type="eggNOG" id="COG0153">
    <property type="taxonomic scope" value="Bacteria"/>
</dbReference>
<dbReference type="HOGENOM" id="CLU_017814_2_1_9"/>
<dbReference type="OrthoDB" id="250531at2"/>
<dbReference type="UniPathway" id="UPA00214"/>
<dbReference type="Proteomes" id="UP000001681">
    <property type="component" value="Chromosome"/>
</dbReference>
<dbReference type="GO" id="GO:0005829">
    <property type="term" value="C:cytosol"/>
    <property type="evidence" value="ECO:0007669"/>
    <property type="project" value="TreeGrafter"/>
</dbReference>
<dbReference type="GO" id="GO:0005524">
    <property type="term" value="F:ATP binding"/>
    <property type="evidence" value="ECO:0007669"/>
    <property type="project" value="UniProtKB-UniRule"/>
</dbReference>
<dbReference type="GO" id="GO:0004335">
    <property type="term" value="F:galactokinase activity"/>
    <property type="evidence" value="ECO:0007669"/>
    <property type="project" value="UniProtKB-UniRule"/>
</dbReference>
<dbReference type="GO" id="GO:0000287">
    <property type="term" value="F:magnesium ion binding"/>
    <property type="evidence" value="ECO:0007669"/>
    <property type="project" value="UniProtKB-UniRule"/>
</dbReference>
<dbReference type="GO" id="GO:0006012">
    <property type="term" value="P:galactose metabolic process"/>
    <property type="evidence" value="ECO:0007669"/>
    <property type="project" value="UniProtKB-UniRule"/>
</dbReference>
<dbReference type="FunFam" id="3.30.230.10:FF:000017">
    <property type="entry name" value="Galactokinase"/>
    <property type="match status" value="1"/>
</dbReference>
<dbReference type="FunFam" id="3.30.70.890:FF:000001">
    <property type="entry name" value="Galactokinase"/>
    <property type="match status" value="1"/>
</dbReference>
<dbReference type="Gene3D" id="3.30.230.10">
    <property type="match status" value="1"/>
</dbReference>
<dbReference type="Gene3D" id="3.30.70.890">
    <property type="entry name" value="GHMP kinase, C-terminal domain"/>
    <property type="match status" value="1"/>
</dbReference>
<dbReference type="HAMAP" id="MF_00246">
    <property type="entry name" value="Galactokinase"/>
    <property type="match status" value="1"/>
</dbReference>
<dbReference type="InterPro" id="IPR000705">
    <property type="entry name" value="Galactokinase"/>
</dbReference>
<dbReference type="InterPro" id="IPR022963">
    <property type="entry name" value="Galactokinase_bac"/>
</dbReference>
<dbReference type="InterPro" id="IPR019741">
    <property type="entry name" value="Galactokinase_CS"/>
</dbReference>
<dbReference type="InterPro" id="IPR019539">
    <property type="entry name" value="GalKase_N"/>
</dbReference>
<dbReference type="InterPro" id="IPR013750">
    <property type="entry name" value="GHMP_kinase_C_dom"/>
</dbReference>
<dbReference type="InterPro" id="IPR036554">
    <property type="entry name" value="GHMP_kinase_C_sf"/>
</dbReference>
<dbReference type="InterPro" id="IPR006204">
    <property type="entry name" value="GHMP_kinase_N_dom"/>
</dbReference>
<dbReference type="InterPro" id="IPR006203">
    <property type="entry name" value="GHMP_knse_ATP-bd_CS"/>
</dbReference>
<dbReference type="InterPro" id="IPR006206">
    <property type="entry name" value="Mevalonate/galactokinase"/>
</dbReference>
<dbReference type="InterPro" id="IPR020568">
    <property type="entry name" value="Ribosomal_Su5_D2-typ_SF"/>
</dbReference>
<dbReference type="InterPro" id="IPR014721">
    <property type="entry name" value="Ribsml_uS5_D2-typ_fold_subgr"/>
</dbReference>
<dbReference type="NCBIfam" id="TIGR00131">
    <property type="entry name" value="gal_kin"/>
    <property type="match status" value="1"/>
</dbReference>
<dbReference type="NCBIfam" id="NF003705">
    <property type="entry name" value="PRK05322.1"/>
    <property type="match status" value="1"/>
</dbReference>
<dbReference type="PANTHER" id="PTHR10457:SF7">
    <property type="entry name" value="GALACTOKINASE-RELATED"/>
    <property type="match status" value="1"/>
</dbReference>
<dbReference type="PANTHER" id="PTHR10457">
    <property type="entry name" value="MEVALONATE KINASE/GALACTOKINASE"/>
    <property type="match status" value="1"/>
</dbReference>
<dbReference type="Pfam" id="PF10509">
    <property type="entry name" value="GalKase_gal_bdg"/>
    <property type="match status" value="1"/>
</dbReference>
<dbReference type="Pfam" id="PF08544">
    <property type="entry name" value="GHMP_kinases_C"/>
    <property type="match status" value="1"/>
</dbReference>
<dbReference type="Pfam" id="PF00288">
    <property type="entry name" value="GHMP_kinases_N"/>
    <property type="match status" value="1"/>
</dbReference>
<dbReference type="PIRSF" id="PIRSF000530">
    <property type="entry name" value="Galactokinase"/>
    <property type="match status" value="1"/>
</dbReference>
<dbReference type="PRINTS" id="PR00473">
    <property type="entry name" value="GALCTOKINASE"/>
</dbReference>
<dbReference type="PRINTS" id="PR00959">
    <property type="entry name" value="MEVGALKINASE"/>
</dbReference>
<dbReference type="SUPFAM" id="SSF55060">
    <property type="entry name" value="GHMP Kinase, C-terminal domain"/>
    <property type="match status" value="1"/>
</dbReference>
<dbReference type="SUPFAM" id="SSF54211">
    <property type="entry name" value="Ribosomal protein S5 domain 2-like"/>
    <property type="match status" value="1"/>
</dbReference>
<dbReference type="PROSITE" id="PS00106">
    <property type="entry name" value="GALACTOKINASE"/>
    <property type="match status" value="1"/>
</dbReference>
<dbReference type="PROSITE" id="PS00627">
    <property type="entry name" value="GHMP_KINASES_ATP"/>
    <property type="match status" value="1"/>
</dbReference>
<organism>
    <name type="scientific">Exiguobacterium sibiricum (strain DSM 17290 / CCUG 55495 / CIP 109462 / JCM 13490 / 255-15)</name>
    <dbReference type="NCBI Taxonomy" id="262543"/>
    <lineage>
        <taxon>Bacteria</taxon>
        <taxon>Bacillati</taxon>
        <taxon>Bacillota</taxon>
        <taxon>Bacilli</taxon>
        <taxon>Bacillales</taxon>
        <taxon>Bacillales Family XII. Incertae Sedis</taxon>
        <taxon>Exiguobacterium</taxon>
    </lineage>
</organism>
<keyword id="KW-0067">ATP-binding</keyword>
<keyword id="KW-0119">Carbohydrate metabolism</keyword>
<keyword id="KW-0963">Cytoplasm</keyword>
<keyword id="KW-0299">Galactose metabolism</keyword>
<keyword id="KW-0418">Kinase</keyword>
<keyword id="KW-0460">Magnesium</keyword>
<keyword id="KW-0479">Metal-binding</keyword>
<keyword id="KW-0547">Nucleotide-binding</keyword>
<keyword id="KW-1185">Reference proteome</keyword>
<keyword id="KW-0808">Transferase</keyword>
<protein>
    <recommendedName>
        <fullName evidence="1">Galactokinase</fullName>
        <ecNumber evidence="1">2.7.1.6</ecNumber>
    </recommendedName>
    <alternativeName>
        <fullName evidence="1">Galactose kinase</fullName>
    </alternativeName>
</protein>
<evidence type="ECO:0000255" key="1">
    <source>
        <dbReference type="HAMAP-Rule" id="MF_00246"/>
    </source>
</evidence>
<reference key="1">
    <citation type="submission" date="2008-04" db="EMBL/GenBank/DDBJ databases">
        <title>Complete sequence of chromosome of Exiguobacterium sibiricum 255-15.</title>
        <authorList>
            <consortium name="US DOE Joint Genome Institute"/>
            <person name="Copeland A."/>
            <person name="Lucas S."/>
            <person name="Lapidus A."/>
            <person name="Glavina del Rio T."/>
            <person name="Dalin E."/>
            <person name="Tice H."/>
            <person name="Bruce D."/>
            <person name="Goodwin L."/>
            <person name="Pitluck S."/>
            <person name="Kiss H."/>
            <person name="Chertkov O."/>
            <person name="Monk C."/>
            <person name="Brettin T."/>
            <person name="Detter J.C."/>
            <person name="Han C."/>
            <person name="Kuske C.R."/>
            <person name="Schmutz J."/>
            <person name="Larimer F."/>
            <person name="Land M."/>
            <person name="Hauser L."/>
            <person name="Kyrpides N."/>
            <person name="Mikhailova N."/>
            <person name="Vishnivetskaya T."/>
            <person name="Rodrigues D.F."/>
            <person name="Gilichinsky D."/>
            <person name="Tiedje J."/>
            <person name="Richardson P."/>
        </authorList>
    </citation>
    <scope>NUCLEOTIDE SEQUENCE [LARGE SCALE GENOMIC DNA]</scope>
    <source>
        <strain>DSM 17290 / CCUG 55495 / CIP 109462 / JCM 13490 / 255-15</strain>
    </source>
</reference>